<evidence type="ECO:0000255" key="1">
    <source>
        <dbReference type="HAMAP-Rule" id="MF_01595"/>
    </source>
</evidence>
<accession>Q482T5</accession>
<feature type="chain" id="PRO_0000329606" description="Polyribonucleotide nucleotidyltransferase">
    <location>
        <begin position="1"/>
        <end position="705"/>
    </location>
</feature>
<feature type="domain" description="KH" evidence="1">
    <location>
        <begin position="553"/>
        <end position="612"/>
    </location>
</feature>
<feature type="domain" description="S1 motif" evidence="1">
    <location>
        <begin position="622"/>
        <end position="690"/>
    </location>
</feature>
<feature type="binding site" evidence="1">
    <location>
        <position position="486"/>
    </location>
    <ligand>
        <name>Mg(2+)</name>
        <dbReference type="ChEBI" id="CHEBI:18420"/>
    </ligand>
</feature>
<feature type="binding site" evidence="1">
    <location>
        <position position="492"/>
    </location>
    <ligand>
        <name>Mg(2+)</name>
        <dbReference type="ChEBI" id="CHEBI:18420"/>
    </ligand>
</feature>
<reference key="1">
    <citation type="journal article" date="2005" name="Proc. Natl. Acad. Sci. U.S.A.">
        <title>The psychrophilic lifestyle as revealed by the genome sequence of Colwellia psychrerythraea 34H through genomic and proteomic analyses.</title>
        <authorList>
            <person name="Methe B.A."/>
            <person name="Nelson K.E."/>
            <person name="Deming J.W."/>
            <person name="Momen B."/>
            <person name="Melamud E."/>
            <person name="Zhang X."/>
            <person name="Moult J."/>
            <person name="Madupu R."/>
            <person name="Nelson W.C."/>
            <person name="Dodson R.J."/>
            <person name="Brinkac L.M."/>
            <person name="Daugherty S.C."/>
            <person name="Durkin A.S."/>
            <person name="DeBoy R.T."/>
            <person name="Kolonay J.F."/>
            <person name="Sullivan S.A."/>
            <person name="Zhou L."/>
            <person name="Davidsen T.M."/>
            <person name="Wu M."/>
            <person name="Huston A.L."/>
            <person name="Lewis M."/>
            <person name="Weaver B."/>
            <person name="Weidman J.F."/>
            <person name="Khouri H."/>
            <person name="Utterback T.R."/>
            <person name="Feldblyum T.V."/>
            <person name="Fraser C.M."/>
        </authorList>
    </citation>
    <scope>NUCLEOTIDE SEQUENCE [LARGE SCALE GENOMIC DNA]</scope>
    <source>
        <strain>34H / ATCC BAA-681</strain>
    </source>
</reference>
<keyword id="KW-0963">Cytoplasm</keyword>
<keyword id="KW-0460">Magnesium</keyword>
<keyword id="KW-0479">Metal-binding</keyword>
<keyword id="KW-0548">Nucleotidyltransferase</keyword>
<keyword id="KW-0694">RNA-binding</keyword>
<keyword id="KW-0808">Transferase</keyword>
<comment type="function">
    <text evidence="1">Involved in mRNA degradation. Catalyzes the phosphorolysis of single-stranded polyribonucleotides processively in the 3'- to 5'-direction.</text>
</comment>
<comment type="catalytic activity">
    <reaction evidence="1">
        <text>RNA(n+1) + phosphate = RNA(n) + a ribonucleoside 5'-diphosphate</text>
        <dbReference type="Rhea" id="RHEA:22096"/>
        <dbReference type="Rhea" id="RHEA-COMP:14527"/>
        <dbReference type="Rhea" id="RHEA-COMP:17342"/>
        <dbReference type="ChEBI" id="CHEBI:43474"/>
        <dbReference type="ChEBI" id="CHEBI:57930"/>
        <dbReference type="ChEBI" id="CHEBI:140395"/>
        <dbReference type="EC" id="2.7.7.8"/>
    </reaction>
</comment>
<comment type="cofactor">
    <cofactor evidence="1">
        <name>Mg(2+)</name>
        <dbReference type="ChEBI" id="CHEBI:18420"/>
    </cofactor>
</comment>
<comment type="subunit">
    <text evidence="1">Component of the RNA degradosome, which is a multiprotein complex involved in RNA processing and mRNA degradation.</text>
</comment>
<comment type="subcellular location">
    <subcellularLocation>
        <location evidence="1">Cytoplasm</location>
    </subcellularLocation>
</comment>
<comment type="similarity">
    <text evidence="1">Belongs to the polyribonucleotide nucleotidyltransferase family.</text>
</comment>
<protein>
    <recommendedName>
        <fullName evidence="1">Polyribonucleotide nucleotidyltransferase</fullName>
        <ecNumber evidence="1">2.7.7.8</ecNumber>
    </recommendedName>
    <alternativeName>
        <fullName evidence="1">Polynucleotide phosphorylase</fullName>
        <shortName evidence="1">PNPase</shortName>
    </alternativeName>
</protein>
<gene>
    <name evidence="1" type="primary">pnp</name>
    <name type="ordered locus">CPS_2207</name>
</gene>
<organism>
    <name type="scientific">Colwellia psychrerythraea (strain 34H / ATCC BAA-681)</name>
    <name type="common">Vibrio psychroerythus</name>
    <dbReference type="NCBI Taxonomy" id="167879"/>
    <lineage>
        <taxon>Bacteria</taxon>
        <taxon>Pseudomonadati</taxon>
        <taxon>Pseudomonadota</taxon>
        <taxon>Gammaproteobacteria</taxon>
        <taxon>Alteromonadales</taxon>
        <taxon>Colwelliaceae</taxon>
        <taxon>Colwellia</taxon>
    </lineage>
</organism>
<sequence length="705" mass="75989">MLNPITKKFQLGKHTVTLETGAIARQASAAVMASMDDTCVLVSVVGKKEAKPGQDFFPLTVNYQERAYAAGKIPGSFFKREGRPSEEETLIARLIDRPIRPLFPEGFTNEVQVIITVVSVNPEIAPDIISLIGTSAALAISGLPFSGPVGAARVGYTDGQYILNPLQSELPTSQLDLVVSGTDSAVLMVESEADVLSEEVMLGAVVYGHEQMQVAVSAIKEFKAEVNTPSWDWVAPVKNAELLAKIAELSEAQVNEAYQITEKAVRYEKIKEIRSSVLEALLAENADVDVQEAKDLFHDLEKTVVRGRITDGNPRIDGRDPESIRALDVMTGVLPRTHGSAVFTRGETQALVTATLGTQRDAQRLDTLMGDKTDPFMLHYNFPPYCVGETGFVGSPKRREIGHGRLAKRGMLAVMPSLEEFPYAVRVVSEITESNGSSSMASVCGTSLALMDAGVPIKASVAGIAMGLVKEGEKFVVLSDILGDEDHLGDMDFKVAGTTGGITALQMDIKIEGITQEIMQIALNQAKAARTHILSVMDEAIGGHRDDISEFAPRIHTMKVSQDKIRDIIGKGGATIRQLTEETGTTIEIEDDGTVKIAATSGEQAEDAINRIKALTAEIEVGTLYTGKVVRIVDFGAFVNVLPGKDGLVHISQISEERVNNVSEVLTEGQEVKVKVLEVDRQGRVRLSIKEAMEKPAAEATPAAE</sequence>
<name>PNP_COLP3</name>
<dbReference type="EC" id="2.7.7.8" evidence="1"/>
<dbReference type="EMBL" id="CP000083">
    <property type="protein sequence ID" value="AAZ24926.1"/>
    <property type="molecule type" value="Genomic_DNA"/>
</dbReference>
<dbReference type="RefSeq" id="WP_011043026.1">
    <property type="nucleotide sequence ID" value="NC_003910.7"/>
</dbReference>
<dbReference type="SMR" id="Q482T5"/>
<dbReference type="STRING" id="167879.CPS_2207"/>
<dbReference type="KEGG" id="cps:CPS_2207"/>
<dbReference type="eggNOG" id="COG1185">
    <property type="taxonomic scope" value="Bacteria"/>
</dbReference>
<dbReference type="HOGENOM" id="CLU_004217_2_2_6"/>
<dbReference type="Proteomes" id="UP000000547">
    <property type="component" value="Chromosome"/>
</dbReference>
<dbReference type="GO" id="GO:0005829">
    <property type="term" value="C:cytosol"/>
    <property type="evidence" value="ECO:0007669"/>
    <property type="project" value="TreeGrafter"/>
</dbReference>
<dbReference type="GO" id="GO:0000175">
    <property type="term" value="F:3'-5'-RNA exonuclease activity"/>
    <property type="evidence" value="ECO:0007669"/>
    <property type="project" value="TreeGrafter"/>
</dbReference>
<dbReference type="GO" id="GO:0000287">
    <property type="term" value="F:magnesium ion binding"/>
    <property type="evidence" value="ECO:0007669"/>
    <property type="project" value="UniProtKB-UniRule"/>
</dbReference>
<dbReference type="GO" id="GO:0004654">
    <property type="term" value="F:polyribonucleotide nucleotidyltransferase activity"/>
    <property type="evidence" value="ECO:0007669"/>
    <property type="project" value="UniProtKB-UniRule"/>
</dbReference>
<dbReference type="GO" id="GO:0003723">
    <property type="term" value="F:RNA binding"/>
    <property type="evidence" value="ECO:0007669"/>
    <property type="project" value="UniProtKB-UniRule"/>
</dbReference>
<dbReference type="GO" id="GO:0006402">
    <property type="term" value="P:mRNA catabolic process"/>
    <property type="evidence" value="ECO:0007669"/>
    <property type="project" value="UniProtKB-UniRule"/>
</dbReference>
<dbReference type="GO" id="GO:0006396">
    <property type="term" value="P:RNA processing"/>
    <property type="evidence" value="ECO:0007669"/>
    <property type="project" value="InterPro"/>
</dbReference>
<dbReference type="CDD" id="cd02393">
    <property type="entry name" value="KH-I_PNPase"/>
    <property type="match status" value="1"/>
</dbReference>
<dbReference type="CDD" id="cd11363">
    <property type="entry name" value="RNase_PH_PNPase_1"/>
    <property type="match status" value="1"/>
</dbReference>
<dbReference type="CDD" id="cd11364">
    <property type="entry name" value="RNase_PH_PNPase_2"/>
    <property type="match status" value="1"/>
</dbReference>
<dbReference type="CDD" id="cd04472">
    <property type="entry name" value="S1_PNPase"/>
    <property type="match status" value="1"/>
</dbReference>
<dbReference type="FunFam" id="2.40.50.140:FF:000023">
    <property type="entry name" value="Polyribonucleotide nucleotidyltransferase"/>
    <property type="match status" value="1"/>
</dbReference>
<dbReference type="FunFam" id="3.30.1370.10:FF:000001">
    <property type="entry name" value="Polyribonucleotide nucleotidyltransferase"/>
    <property type="match status" value="1"/>
</dbReference>
<dbReference type="FunFam" id="3.30.230.70:FF:000001">
    <property type="entry name" value="Polyribonucleotide nucleotidyltransferase"/>
    <property type="match status" value="1"/>
</dbReference>
<dbReference type="FunFam" id="3.30.230.70:FF:000002">
    <property type="entry name" value="Polyribonucleotide nucleotidyltransferase"/>
    <property type="match status" value="1"/>
</dbReference>
<dbReference type="Gene3D" id="3.30.230.70">
    <property type="entry name" value="GHMP Kinase, N-terminal domain"/>
    <property type="match status" value="2"/>
</dbReference>
<dbReference type="Gene3D" id="3.30.1370.10">
    <property type="entry name" value="K Homology domain, type 1"/>
    <property type="match status" value="1"/>
</dbReference>
<dbReference type="Gene3D" id="2.40.50.140">
    <property type="entry name" value="Nucleic acid-binding proteins"/>
    <property type="match status" value="1"/>
</dbReference>
<dbReference type="HAMAP" id="MF_01595">
    <property type="entry name" value="PNPase"/>
    <property type="match status" value="1"/>
</dbReference>
<dbReference type="InterPro" id="IPR001247">
    <property type="entry name" value="ExoRNase_PH_dom1"/>
</dbReference>
<dbReference type="InterPro" id="IPR015847">
    <property type="entry name" value="ExoRNase_PH_dom2"/>
</dbReference>
<dbReference type="InterPro" id="IPR036345">
    <property type="entry name" value="ExoRNase_PH_dom2_sf"/>
</dbReference>
<dbReference type="InterPro" id="IPR004087">
    <property type="entry name" value="KH_dom"/>
</dbReference>
<dbReference type="InterPro" id="IPR004088">
    <property type="entry name" value="KH_dom_type_1"/>
</dbReference>
<dbReference type="InterPro" id="IPR036612">
    <property type="entry name" value="KH_dom_type_1_sf"/>
</dbReference>
<dbReference type="InterPro" id="IPR012340">
    <property type="entry name" value="NA-bd_OB-fold"/>
</dbReference>
<dbReference type="InterPro" id="IPR012162">
    <property type="entry name" value="PNPase"/>
</dbReference>
<dbReference type="InterPro" id="IPR027408">
    <property type="entry name" value="PNPase/RNase_PH_dom_sf"/>
</dbReference>
<dbReference type="InterPro" id="IPR015848">
    <property type="entry name" value="PNPase_PH_RNA-bd_bac/org-type"/>
</dbReference>
<dbReference type="InterPro" id="IPR020568">
    <property type="entry name" value="Ribosomal_Su5_D2-typ_SF"/>
</dbReference>
<dbReference type="InterPro" id="IPR003029">
    <property type="entry name" value="S1_domain"/>
</dbReference>
<dbReference type="NCBIfam" id="TIGR03591">
    <property type="entry name" value="polynuc_phos"/>
    <property type="match status" value="1"/>
</dbReference>
<dbReference type="NCBIfam" id="NF008805">
    <property type="entry name" value="PRK11824.1"/>
    <property type="match status" value="1"/>
</dbReference>
<dbReference type="PANTHER" id="PTHR11252">
    <property type="entry name" value="POLYRIBONUCLEOTIDE NUCLEOTIDYLTRANSFERASE"/>
    <property type="match status" value="1"/>
</dbReference>
<dbReference type="PANTHER" id="PTHR11252:SF0">
    <property type="entry name" value="POLYRIBONUCLEOTIDE NUCLEOTIDYLTRANSFERASE 1, MITOCHONDRIAL"/>
    <property type="match status" value="1"/>
</dbReference>
<dbReference type="Pfam" id="PF00013">
    <property type="entry name" value="KH_1"/>
    <property type="match status" value="1"/>
</dbReference>
<dbReference type="Pfam" id="PF03726">
    <property type="entry name" value="PNPase"/>
    <property type="match status" value="1"/>
</dbReference>
<dbReference type="Pfam" id="PF01138">
    <property type="entry name" value="RNase_PH"/>
    <property type="match status" value="2"/>
</dbReference>
<dbReference type="Pfam" id="PF03725">
    <property type="entry name" value="RNase_PH_C"/>
    <property type="match status" value="2"/>
</dbReference>
<dbReference type="Pfam" id="PF00575">
    <property type="entry name" value="S1"/>
    <property type="match status" value="1"/>
</dbReference>
<dbReference type="PIRSF" id="PIRSF005499">
    <property type="entry name" value="PNPase"/>
    <property type="match status" value="1"/>
</dbReference>
<dbReference type="SMART" id="SM00322">
    <property type="entry name" value="KH"/>
    <property type="match status" value="1"/>
</dbReference>
<dbReference type="SMART" id="SM00316">
    <property type="entry name" value="S1"/>
    <property type="match status" value="1"/>
</dbReference>
<dbReference type="SUPFAM" id="SSF54791">
    <property type="entry name" value="Eukaryotic type KH-domain (KH-domain type I)"/>
    <property type="match status" value="1"/>
</dbReference>
<dbReference type="SUPFAM" id="SSF50249">
    <property type="entry name" value="Nucleic acid-binding proteins"/>
    <property type="match status" value="1"/>
</dbReference>
<dbReference type="SUPFAM" id="SSF55666">
    <property type="entry name" value="Ribonuclease PH domain 2-like"/>
    <property type="match status" value="2"/>
</dbReference>
<dbReference type="SUPFAM" id="SSF54211">
    <property type="entry name" value="Ribosomal protein S5 domain 2-like"/>
    <property type="match status" value="2"/>
</dbReference>
<dbReference type="PROSITE" id="PS50084">
    <property type="entry name" value="KH_TYPE_1"/>
    <property type="match status" value="1"/>
</dbReference>
<dbReference type="PROSITE" id="PS50126">
    <property type="entry name" value="S1"/>
    <property type="match status" value="1"/>
</dbReference>
<proteinExistence type="inferred from homology"/>